<accession>Q75HJ4</accession>
<accession>A0A0P0W4E7</accession>
<gene>
    <name type="ordered locus">Os03g0804700</name>
    <name type="ordered locus">LOC_Os03g59010</name>
    <name type="ORF">OsJ_012452</name>
    <name type="ORF">OSJNBb0015I02.10</name>
</gene>
<proteinExistence type="evidence at transcript level"/>
<sequence length="225" mass="23128">MSRTSSAPLLVLSAALAVLASTCIADPEPVQDFCVAVVPRAGDAAAAACPAYPGFPCKPASTVVSDDFFFAGLAVASDTDNRFGFNVTAANAETFPGLNTLGVSIGRVDLAPGGVNPLHSHPRATELIHVVAGRVLAGFVSTAGEFYSKVLGEGETFVVPRGMIHFQYNVGGVAAQVITAFNSQMPGVVAAGSTLFGSDPEIPDAVLAKSFQVDAKIIKLLKSKF</sequence>
<evidence type="ECO:0000250" key="1"/>
<evidence type="ECO:0000255" key="2"/>
<evidence type="ECO:0000305" key="3"/>
<protein>
    <recommendedName>
        <fullName>Germin-like protein 3-8</fullName>
    </recommendedName>
</protein>
<organism>
    <name type="scientific">Oryza sativa subsp. japonica</name>
    <name type="common">Rice</name>
    <dbReference type="NCBI Taxonomy" id="39947"/>
    <lineage>
        <taxon>Eukaryota</taxon>
        <taxon>Viridiplantae</taxon>
        <taxon>Streptophyta</taxon>
        <taxon>Embryophyta</taxon>
        <taxon>Tracheophyta</taxon>
        <taxon>Spermatophyta</taxon>
        <taxon>Magnoliopsida</taxon>
        <taxon>Liliopsida</taxon>
        <taxon>Poales</taxon>
        <taxon>Poaceae</taxon>
        <taxon>BOP clade</taxon>
        <taxon>Oryzoideae</taxon>
        <taxon>Oryzeae</taxon>
        <taxon>Oryzinae</taxon>
        <taxon>Oryza</taxon>
        <taxon>Oryza sativa</taxon>
    </lineage>
</organism>
<keyword id="KW-0052">Apoplast</keyword>
<keyword id="KW-1015">Disulfide bond</keyword>
<keyword id="KW-0325">Glycoprotein</keyword>
<keyword id="KW-0464">Manganese</keyword>
<keyword id="KW-0479">Metal-binding</keyword>
<keyword id="KW-1185">Reference proteome</keyword>
<keyword id="KW-0964">Secreted</keyword>
<keyword id="KW-0732">Signal</keyword>
<reference key="1">
    <citation type="journal article" date="2005" name="Genome Res.">
        <title>Sequence, annotation, and analysis of synteny between rice chromosome 3 and diverged grass species.</title>
        <authorList>
            <consortium name="The rice chromosome 3 sequencing consortium"/>
            <person name="Buell C.R."/>
            <person name="Yuan Q."/>
            <person name="Ouyang S."/>
            <person name="Liu J."/>
            <person name="Zhu W."/>
            <person name="Wang A."/>
            <person name="Maiti R."/>
            <person name="Haas B."/>
            <person name="Wortman J."/>
            <person name="Pertea M."/>
            <person name="Jones K.M."/>
            <person name="Kim M."/>
            <person name="Overton L."/>
            <person name="Tsitrin T."/>
            <person name="Fadrosh D."/>
            <person name="Bera J."/>
            <person name="Weaver B."/>
            <person name="Jin S."/>
            <person name="Johri S."/>
            <person name="Reardon M."/>
            <person name="Webb K."/>
            <person name="Hill J."/>
            <person name="Moffat K."/>
            <person name="Tallon L."/>
            <person name="Van Aken S."/>
            <person name="Lewis M."/>
            <person name="Utterback T."/>
            <person name="Feldblyum T."/>
            <person name="Zismann V."/>
            <person name="Iobst S."/>
            <person name="Hsiao J."/>
            <person name="de Vazeille A.R."/>
            <person name="Salzberg S.L."/>
            <person name="White O."/>
            <person name="Fraser C.M."/>
            <person name="Yu Y."/>
            <person name="Kim H."/>
            <person name="Rambo T."/>
            <person name="Currie J."/>
            <person name="Collura K."/>
            <person name="Kernodle-Thompson S."/>
            <person name="Wei F."/>
            <person name="Kudrna K."/>
            <person name="Ammiraju J.S.S."/>
            <person name="Luo M."/>
            <person name="Goicoechea J.L."/>
            <person name="Wing R.A."/>
            <person name="Henry D."/>
            <person name="Oates R."/>
            <person name="Palmer M."/>
            <person name="Pries G."/>
            <person name="Saski C."/>
            <person name="Simmons J."/>
            <person name="Soderlund C."/>
            <person name="Nelson W."/>
            <person name="de la Bastide M."/>
            <person name="Spiegel L."/>
            <person name="Nascimento L."/>
            <person name="Huang E."/>
            <person name="Preston R."/>
            <person name="Zutavern T."/>
            <person name="Palmer L."/>
            <person name="O'Shaughnessy A."/>
            <person name="Dike S."/>
            <person name="McCombie W.R."/>
            <person name="Minx P."/>
            <person name="Cordum H."/>
            <person name="Wilson R."/>
            <person name="Jin W."/>
            <person name="Lee H.R."/>
            <person name="Jiang J."/>
            <person name="Jackson S."/>
        </authorList>
    </citation>
    <scope>NUCLEOTIDE SEQUENCE [LARGE SCALE GENOMIC DNA]</scope>
    <source>
        <strain>cv. Nipponbare</strain>
    </source>
</reference>
<reference key="2">
    <citation type="journal article" date="2005" name="Nature">
        <title>The map-based sequence of the rice genome.</title>
        <authorList>
            <consortium name="International rice genome sequencing project (IRGSP)"/>
        </authorList>
    </citation>
    <scope>NUCLEOTIDE SEQUENCE [LARGE SCALE GENOMIC DNA]</scope>
    <source>
        <strain>cv. Nipponbare</strain>
    </source>
</reference>
<reference key="3">
    <citation type="journal article" date="2008" name="Nucleic Acids Res.">
        <title>The rice annotation project database (RAP-DB): 2008 update.</title>
        <authorList>
            <consortium name="The rice annotation project (RAP)"/>
        </authorList>
    </citation>
    <scope>GENOME REANNOTATION</scope>
    <source>
        <strain>cv. Nipponbare</strain>
    </source>
</reference>
<reference key="4">
    <citation type="journal article" date="2013" name="Rice">
        <title>Improvement of the Oryza sativa Nipponbare reference genome using next generation sequence and optical map data.</title>
        <authorList>
            <person name="Kawahara Y."/>
            <person name="de la Bastide M."/>
            <person name="Hamilton J.P."/>
            <person name="Kanamori H."/>
            <person name="McCombie W.R."/>
            <person name="Ouyang S."/>
            <person name="Schwartz D.C."/>
            <person name="Tanaka T."/>
            <person name="Wu J."/>
            <person name="Zhou S."/>
            <person name="Childs K.L."/>
            <person name="Davidson R.M."/>
            <person name="Lin H."/>
            <person name="Quesada-Ocampo L."/>
            <person name="Vaillancourt B."/>
            <person name="Sakai H."/>
            <person name="Lee S.S."/>
            <person name="Kim J."/>
            <person name="Numa H."/>
            <person name="Itoh T."/>
            <person name="Buell C.R."/>
            <person name="Matsumoto T."/>
        </authorList>
    </citation>
    <scope>GENOME REANNOTATION</scope>
    <source>
        <strain>cv. Nipponbare</strain>
    </source>
</reference>
<reference key="5">
    <citation type="journal article" date="2005" name="PLoS Biol.">
        <title>The genomes of Oryza sativa: a history of duplications.</title>
        <authorList>
            <person name="Yu J."/>
            <person name="Wang J."/>
            <person name="Lin W."/>
            <person name="Li S."/>
            <person name="Li H."/>
            <person name="Zhou J."/>
            <person name="Ni P."/>
            <person name="Dong W."/>
            <person name="Hu S."/>
            <person name="Zeng C."/>
            <person name="Zhang J."/>
            <person name="Zhang Y."/>
            <person name="Li R."/>
            <person name="Xu Z."/>
            <person name="Li S."/>
            <person name="Li X."/>
            <person name="Zheng H."/>
            <person name="Cong L."/>
            <person name="Lin L."/>
            <person name="Yin J."/>
            <person name="Geng J."/>
            <person name="Li G."/>
            <person name="Shi J."/>
            <person name="Liu J."/>
            <person name="Lv H."/>
            <person name="Li J."/>
            <person name="Wang J."/>
            <person name="Deng Y."/>
            <person name="Ran L."/>
            <person name="Shi X."/>
            <person name="Wang X."/>
            <person name="Wu Q."/>
            <person name="Li C."/>
            <person name="Ren X."/>
            <person name="Wang J."/>
            <person name="Wang X."/>
            <person name="Li D."/>
            <person name="Liu D."/>
            <person name="Zhang X."/>
            <person name="Ji Z."/>
            <person name="Zhao W."/>
            <person name="Sun Y."/>
            <person name="Zhang Z."/>
            <person name="Bao J."/>
            <person name="Han Y."/>
            <person name="Dong L."/>
            <person name="Ji J."/>
            <person name="Chen P."/>
            <person name="Wu S."/>
            <person name="Liu J."/>
            <person name="Xiao Y."/>
            <person name="Bu D."/>
            <person name="Tan J."/>
            <person name="Yang L."/>
            <person name="Ye C."/>
            <person name="Zhang J."/>
            <person name="Xu J."/>
            <person name="Zhou Y."/>
            <person name="Yu Y."/>
            <person name="Zhang B."/>
            <person name="Zhuang S."/>
            <person name="Wei H."/>
            <person name="Liu B."/>
            <person name="Lei M."/>
            <person name="Yu H."/>
            <person name="Li Y."/>
            <person name="Xu H."/>
            <person name="Wei S."/>
            <person name="He X."/>
            <person name="Fang L."/>
            <person name="Zhang Z."/>
            <person name="Zhang Y."/>
            <person name="Huang X."/>
            <person name="Su Z."/>
            <person name="Tong W."/>
            <person name="Li J."/>
            <person name="Tong Z."/>
            <person name="Li S."/>
            <person name="Ye J."/>
            <person name="Wang L."/>
            <person name="Fang L."/>
            <person name="Lei T."/>
            <person name="Chen C.-S."/>
            <person name="Chen H.-C."/>
            <person name="Xu Z."/>
            <person name="Li H."/>
            <person name="Huang H."/>
            <person name="Zhang F."/>
            <person name="Xu H."/>
            <person name="Li N."/>
            <person name="Zhao C."/>
            <person name="Li S."/>
            <person name="Dong L."/>
            <person name="Huang Y."/>
            <person name="Li L."/>
            <person name="Xi Y."/>
            <person name="Qi Q."/>
            <person name="Li W."/>
            <person name="Zhang B."/>
            <person name="Hu W."/>
            <person name="Zhang Y."/>
            <person name="Tian X."/>
            <person name="Jiao Y."/>
            <person name="Liang X."/>
            <person name="Jin J."/>
            <person name="Gao L."/>
            <person name="Zheng W."/>
            <person name="Hao B."/>
            <person name="Liu S.-M."/>
            <person name="Wang W."/>
            <person name="Yuan L."/>
            <person name="Cao M."/>
            <person name="McDermott J."/>
            <person name="Samudrala R."/>
            <person name="Wang J."/>
            <person name="Wong G.K.-S."/>
            <person name="Yang H."/>
        </authorList>
    </citation>
    <scope>NUCLEOTIDE SEQUENCE [LARGE SCALE GENOMIC DNA]</scope>
    <source>
        <strain>cv. Nipponbare</strain>
    </source>
</reference>
<name>GL38_ORYSJ</name>
<feature type="signal peptide" evidence="2">
    <location>
        <begin position="1"/>
        <end position="25"/>
    </location>
</feature>
<feature type="chain" id="PRO_0000365509" description="Germin-like protein 3-8">
    <location>
        <begin position="26"/>
        <end position="225"/>
    </location>
</feature>
<feature type="domain" description="Cupin type-1" evidence="2">
    <location>
        <begin position="71"/>
        <end position="219"/>
    </location>
</feature>
<feature type="binding site" evidence="1">
    <location>
        <position position="119"/>
    </location>
    <ligand>
        <name>Mn(2+)</name>
        <dbReference type="ChEBI" id="CHEBI:29035"/>
    </ligand>
</feature>
<feature type="binding site" evidence="1">
    <location>
        <position position="121"/>
    </location>
    <ligand>
        <name>Mn(2+)</name>
        <dbReference type="ChEBI" id="CHEBI:29035"/>
    </ligand>
</feature>
<feature type="binding site" evidence="1">
    <location>
        <position position="126"/>
    </location>
    <ligand>
        <name>Mn(2+)</name>
        <dbReference type="ChEBI" id="CHEBI:29035"/>
    </ligand>
</feature>
<feature type="binding site" evidence="1">
    <location>
        <position position="165"/>
    </location>
    <ligand>
        <name>Mn(2+)</name>
        <dbReference type="ChEBI" id="CHEBI:29035"/>
    </ligand>
</feature>
<feature type="glycosylation site" description="N-linked (GlcNAc...) asparagine" evidence="2">
    <location>
        <position position="86"/>
    </location>
</feature>
<feature type="disulfide bond" evidence="1">
    <location>
        <begin position="34"/>
        <end position="57"/>
    </location>
</feature>
<dbReference type="EMBL" id="AC135563">
    <property type="protein sequence ID" value="AAS07230.1"/>
    <property type="molecule type" value="Genomic_DNA"/>
</dbReference>
<dbReference type="EMBL" id="DP000009">
    <property type="protein sequence ID" value="ABF99426.1"/>
    <property type="molecule type" value="Genomic_DNA"/>
</dbReference>
<dbReference type="EMBL" id="AP008209">
    <property type="protein sequence ID" value="BAF13536.2"/>
    <property type="status" value="ALT_INIT"/>
    <property type="molecule type" value="Genomic_DNA"/>
</dbReference>
<dbReference type="EMBL" id="AP014959">
    <property type="protein sequence ID" value="BAS86930.1"/>
    <property type="molecule type" value="Genomic_DNA"/>
</dbReference>
<dbReference type="EMBL" id="CM000140">
    <property type="protein sequence ID" value="EAZ28969.1"/>
    <property type="molecule type" value="Genomic_DNA"/>
</dbReference>
<dbReference type="SMR" id="Q75HJ4"/>
<dbReference type="FunCoup" id="Q75HJ4">
    <property type="interactions" value="42"/>
</dbReference>
<dbReference type="STRING" id="39947.Q75HJ4"/>
<dbReference type="PaxDb" id="39947-Q75HJ4"/>
<dbReference type="EnsemblPlants" id="Os03t0804700-00">
    <property type="protein sequence ID" value="Os03t0804700-00"/>
    <property type="gene ID" value="Os03g0804700"/>
</dbReference>
<dbReference type="Gramene" id="Os03t0804700-00">
    <property type="protein sequence ID" value="Os03t0804700-00"/>
    <property type="gene ID" value="Os03g0804700"/>
</dbReference>
<dbReference type="KEGG" id="dosa:Os03g0804700"/>
<dbReference type="KEGG" id="osa:4334489"/>
<dbReference type="eggNOG" id="ENOG502QSRM">
    <property type="taxonomic scope" value="Eukaryota"/>
</dbReference>
<dbReference type="HOGENOM" id="CLU_015790_0_3_1"/>
<dbReference type="InParanoid" id="Q75HJ4"/>
<dbReference type="OMA" id="DYNFPCK"/>
<dbReference type="OrthoDB" id="1921208at2759"/>
<dbReference type="Proteomes" id="UP000000763">
    <property type="component" value="Chromosome 3"/>
</dbReference>
<dbReference type="Proteomes" id="UP000007752">
    <property type="component" value="Chromosome 3"/>
</dbReference>
<dbReference type="Proteomes" id="UP000059680">
    <property type="component" value="Chromosome 3"/>
</dbReference>
<dbReference type="GO" id="GO:0048046">
    <property type="term" value="C:apoplast"/>
    <property type="evidence" value="ECO:0007669"/>
    <property type="project" value="UniProtKB-SubCell"/>
</dbReference>
<dbReference type="GO" id="GO:0030145">
    <property type="term" value="F:manganese ion binding"/>
    <property type="evidence" value="ECO:0007669"/>
    <property type="project" value="InterPro"/>
</dbReference>
<dbReference type="CDD" id="cd02241">
    <property type="entry name" value="cupin_OxOx"/>
    <property type="match status" value="1"/>
</dbReference>
<dbReference type="FunFam" id="2.60.120.10:FF:000005">
    <property type="entry name" value="Germin-like protein subfamily 1 member 8"/>
    <property type="match status" value="1"/>
</dbReference>
<dbReference type="Gene3D" id="2.60.120.10">
    <property type="entry name" value="Jelly Rolls"/>
    <property type="match status" value="1"/>
</dbReference>
<dbReference type="InterPro" id="IPR006045">
    <property type="entry name" value="Cupin_1"/>
</dbReference>
<dbReference type="InterPro" id="IPR001929">
    <property type="entry name" value="Germin"/>
</dbReference>
<dbReference type="InterPro" id="IPR019780">
    <property type="entry name" value="Germin_Mn-BS"/>
</dbReference>
<dbReference type="InterPro" id="IPR014710">
    <property type="entry name" value="RmlC-like_jellyroll"/>
</dbReference>
<dbReference type="InterPro" id="IPR011051">
    <property type="entry name" value="RmlC_Cupin_sf"/>
</dbReference>
<dbReference type="PANTHER" id="PTHR31238">
    <property type="entry name" value="GERMIN-LIKE PROTEIN SUBFAMILY 3 MEMBER 3"/>
    <property type="match status" value="1"/>
</dbReference>
<dbReference type="Pfam" id="PF00190">
    <property type="entry name" value="Cupin_1"/>
    <property type="match status" value="1"/>
</dbReference>
<dbReference type="PRINTS" id="PR00325">
    <property type="entry name" value="GERMIN"/>
</dbReference>
<dbReference type="SMART" id="SM00835">
    <property type="entry name" value="Cupin_1"/>
    <property type="match status" value="1"/>
</dbReference>
<dbReference type="SUPFAM" id="SSF51182">
    <property type="entry name" value="RmlC-like cupins"/>
    <property type="match status" value="1"/>
</dbReference>
<dbReference type="PROSITE" id="PS00725">
    <property type="entry name" value="GERMIN"/>
    <property type="match status" value="1"/>
</dbReference>
<comment type="function">
    <text>May play a role in plant defense. Probably has no oxalate oxidase activity even if the active site is conserved.</text>
</comment>
<comment type="subunit">
    <text evidence="1">Oligomer (believed to be a pentamer but probably hexamer).</text>
</comment>
<comment type="subcellular location">
    <subcellularLocation>
        <location evidence="1">Secreted</location>
        <location evidence="1">Extracellular space</location>
        <location evidence="1">Apoplast</location>
    </subcellularLocation>
</comment>
<comment type="similarity">
    <text evidence="3">Belongs to the germin family.</text>
</comment>
<comment type="sequence caution" evidence="3">
    <conflict type="erroneous initiation">
        <sequence resource="EMBL-CDS" id="BAF13536"/>
    </conflict>
    <text>Extended N-terminus.</text>
</comment>